<gene>
    <name evidence="1" type="primary">mnmG</name>
    <name evidence="1" type="synonym">gidA</name>
    <name type="ordered locus">SYNPCC7002_A1112</name>
</gene>
<name>MNMG_PICP2</name>
<sequence>MLRTPVDFQDEFDVIVIGAGHSGCEAALASARLGCRTLMLTLNLDKIAWQPCNPAVGGPAKSQLTHEVDALGGEIGKMADRTYLQKRVLNASRGPAVWALRAQTDKREYAAVMKNIVENQDNLVIREGMATDLVLGNNDEICGIQTYFGTCFGAKAVVLTTGTFLGGTIWIGNKSMPAGRAGEFAAVGMTETLNELGFETGRLKTGTPARVDRRSVDYSKMEIQPADEEVRWFSFDPEAWVEREQMPCYLTRTTPKTHQLIKDNLHLSPIYGGFIDSKGPRYCPSIEDKIVRFADKDSHQIFIEPEGRTIPELYIQGFSTGLPESLQLQMLQSLPGMEDCVMLRPAYAVEYDYLPATQCYPTLMTKRVEGLFSAGQINGTTGYEEAAAQGIVAGINAAKFAQGQDMVVFPREQSYLGTLIDDLCTKDLREPYRMLTSRSEYRLILRSDNADQRLTPLGREIGLIGDRRWALYQTKQENIAAEKERLHTERVKELDPLGQKIAADTGQKIKSSVTLADLLRRPKFHYADLASYGLGNEALTQAEQAGAEIDIKYSGYIKRQQNQIDQISRHANRKLPEGLDYLTVETLSMEAREKLNKVRPLTIGQATRIGGVNPADINALLVYLEVQHRQKNAQEAVTS</sequence>
<accession>B1XJY4</accession>
<keyword id="KW-0963">Cytoplasm</keyword>
<keyword id="KW-0274">FAD</keyword>
<keyword id="KW-0285">Flavoprotein</keyword>
<keyword id="KW-0520">NAD</keyword>
<keyword id="KW-1185">Reference proteome</keyword>
<keyword id="KW-0819">tRNA processing</keyword>
<proteinExistence type="inferred from homology"/>
<feature type="chain" id="PRO_0000345344" description="tRNA uridine 5-carboxymethylaminomethyl modification enzyme MnmG">
    <location>
        <begin position="1"/>
        <end position="639"/>
    </location>
</feature>
<feature type="binding site" evidence="1">
    <location>
        <begin position="18"/>
        <end position="23"/>
    </location>
    <ligand>
        <name>FAD</name>
        <dbReference type="ChEBI" id="CHEBI:57692"/>
    </ligand>
</feature>
<feature type="binding site" evidence="1">
    <location>
        <begin position="279"/>
        <end position="293"/>
    </location>
    <ligand>
        <name>NAD(+)</name>
        <dbReference type="ChEBI" id="CHEBI:57540"/>
    </ligand>
</feature>
<protein>
    <recommendedName>
        <fullName evidence="1">tRNA uridine 5-carboxymethylaminomethyl modification enzyme MnmG</fullName>
    </recommendedName>
    <alternativeName>
        <fullName evidence="1">Glucose-inhibited division protein A</fullName>
    </alternativeName>
</protein>
<comment type="function">
    <text evidence="1">NAD-binding protein involved in the addition of a carboxymethylaminomethyl (cmnm) group at the wobble position (U34) of certain tRNAs, forming tRNA-cmnm(5)s(2)U34.</text>
</comment>
<comment type="cofactor">
    <cofactor evidence="1">
        <name>FAD</name>
        <dbReference type="ChEBI" id="CHEBI:57692"/>
    </cofactor>
</comment>
<comment type="subunit">
    <text evidence="1">Homodimer. Heterotetramer of two MnmE and two MnmG subunits.</text>
</comment>
<comment type="subcellular location">
    <subcellularLocation>
        <location evidence="1">Cytoplasm</location>
    </subcellularLocation>
</comment>
<comment type="similarity">
    <text evidence="1">Belongs to the MnmG family.</text>
</comment>
<organism>
    <name type="scientific">Picosynechococcus sp. (strain ATCC 27264 / PCC 7002 / PR-6)</name>
    <name type="common">Agmenellum quadruplicatum</name>
    <dbReference type="NCBI Taxonomy" id="32049"/>
    <lineage>
        <taxon>Bacteria</taxon>
        <taxon>Bacillati</taxon>
        <taxon>Cyanobacteriota</taxon>
        <taxon>Cyanophyceae</taxon>
        <taxon>Oscillatoriophycideae</taxon>
        <taxon>Chroococcales</taxon>
        <taxon>Geminocystaceae</taxon>
        <taxon>Picosynechococcus</taxon>
    </lineage>
</organism>
<dbReference type="EMBL" id="CP000951">
    <property type="protein sequence ID" value="ACA99112.1"/>
    <property type="molecule type" value="Genomic_DNA"/>
</dbReference>
<dbReference type="RefSeq" id="WP_012306735.1">
    <property type="nucleotide sequence ID" value="NZ_JAHHPU010000001.1"/>
</dbReference>
<dbReference type="SMR" id="B1XJY4"/>
<dbReference type="STRING" id="32049.SYNPCC7002_A1112"/>
<dbReference type="KEGG" id="syp:SYNPCC7002_A1112"/>
<dbReference type="eggNOG" id="COG0445">
    <property type="taxonomic scope" value="Bacteria"/>
</dbReference>
<dbReference type="HOGENOM" id="CLU_007831_2_2_3"/>
<dbReference type="Proteomes" id="UP000001688">
    <property type="component" value="Chromosome"/>
</dbReference>
<dbReference type="GO" id="GO:0005737">
    <property type="term" value="C:cytoplasm"/>
    <property type="evidence" value="ECO:0007669"/>
    <property type="project" value="UniProtKB-SubCell"/>
</dbReference>
<dbReference type="GO" id="GO:0050660">
    <property type="term" value="F:flavin adenine dinucleotide binding"/>
    <property type="evidence" value="ECO:0007669"/>
    <property type="project" value="UniProtKB-UniRule"/>
</dbReference>
<dbReference type="GO" id="GO:0030488">
    <property type="term" value="P:tRNA methylation"/>
    <property type="evidence" value="ECO:0007669"/>
    <property type="project" value="TreeGrafter"/>
</dbReference>
<dbReference type="GO" id="GO:0002098">
    <property type="term" value="P:tRNA wobble uridine modification"/>
    <property type="evidence" value="ECO:0007669"/>
    <property type="project" value="InterPro"/>
</dbReference>
<dbReference type="FunFam" id="1.10.10.1800:FF:000001">
    <property type="entry name" value="tRNA uridine 5-carboxymethylaminomethyl modification enzyme MnmG"/>
    <property type="match status" value="1"/>
</dbReference>
<dbReference type="FunFam" id="1.10.150.570:FF:000001">
    <property type="entry name" value="tRNA uridine 5-carboxymethylaminomethyl modification enzyme MnmG"/>
    <property type="match status" value="1"/>
</dbReference>
<dbReference type="FunFam" id="3.50.50.60:FF:000094">
    <property type="entry name" value="tRNA uridine 5-carboxymethylaminomethyl modification enzyme MnmG"/>
    <property type="match status" value="1"/>
</dbReference>
<dbReference type="FunFam" id="3.50.50.60:FF:000119">
    <property type="entry name" value="tRNA uridine 5-carboxymethylaminomethyl modification enzyme MnmG"/>
    <property type="match status" value="1"/>
</dbReference>
<dbReference type="Gene3D" id="3.50.50.60">
    <property type="entry name" value="FAD/NAD(P)-binding domain"/>
    <property type="match status" value="2"/>
</dbReference>
<dbReference type="Gene3D" id="1.10.150.570">
    <property type="entry name" value="GidA associated domain, C-terminal subdomain"/>
    <property type="match status" value="1"/>
</dbReference>
<dbReference type="Gene3D" id="1.10.10.1800">
    <property type="entry name" value="tRNA uridine 5-carboxymethylaminomethyl modification enzyme MnmG/GidA"/>
    <property type="match status" value="1"/>
</dbReference>
<dbReference type="HAMAP" id="MF_00129">
    <property type="entry name" value="MnmG_GidA"/>
    <property type="match status" value="1"/>
</dbReference>
<dbReference type="InterPro" id="IPR036188">
    <property type="entry name" value="FAD/NAD-bd_sf"/>
</dbReference>
<dbReference type="InterPro" id="IPR049312">
    <property type="entry name" value="GIDA_C_N"/>
</dbReference>
<dbReference type="InterPro" id="IPR004416">
    <property type="entry name" value="MnmG"/>
</dbReference>
<dbReference type="InterPro" id="IPR002218">
    <property type="entry name" value="MnmG-rel"/>
</dbReference>
<dbReference type="InterPro" id="IPR020595">
    <property type="entry name" value="MnmG-rel_CS"/>
</dbReference>
<dbReference type="InterPro" id="IPR026904">
    <property type="entry name" value="MnmG_C"/>
</dbReference>
<dbReference type="InterPro" id="IPR047001">
    <property type="entry name" value="MnmG_C_subdom"/>
</dbReference>
<dbReference type="InterPro" id="IPR044920">
    <property type="entry name" value="MnmG_C_subdom_sf"/>
</dbReference>
<dbReference type="InterPro" id="IPR040131">
    <property type="entry name" value="MnmG_N"/>
</dbReference>
<dbReference type="NCBIfam" id="TIGR00136">
    <property type="entry name" value="mnmG_gidA"/>
    <property type="match status" value="1"/>
</dbReference>
<dbReference type="PANTHER" id="PTHR11806">
    <property type="entry name" value="GLUCOSE INHIBITED DIVISION PROTEIN A"/>
    <property type="match status" value="1"/>
</dbReference>
<dbReference type="PANTHER" id="PTHR11806:SF0">
    <property type="entry name" value="PROTEIN MTO1 HOMOLOG, MITOCHONDRIAL"/>
    <property type="match status" value="1"/>
</dbReference>
<dbReference type="Pfam" id="PF01134">
    <property type="entry name" value="GIDA"/>
    <property type="match status" value="1"/>
</dbReference>
<dbReference type="Pfam" id="PF21680">
    <property type="entry name" value="GIDA_C_1st"/>
    <property type="match status" value="1"/>
</dbReference>
<dbReference type="Pfam" id="PF13932">
    <property type="entry name" value="SAM_GIDA_C"/>
    <property type="match status" value="1"/>
</dbReference>
<dbReference type="SMART" id="SM01228">
    <property type="entry name" value="GIDA_assoc_3"/>
    <property type="match status" value="1"/>
</dbReference>
<dbReference type="SUPFAM" id="SSF51905">
    <property type="entry name" value="FAD/NAD(P)-binding domain"/>
    <property type="match status" value="1"/>
</dbReference>
<dbReference type="PROSITE" id="PS01280">
    <property type="entry name" value="GIDA_1"/>
    <property type="match status" value="1"/>
</dbReference>
<dbReference type="PROSITE" id="PS01281">
    <property type="entry name" value="GIDA_2"/>
    <property type="match status" value="1"/>
</dbReference>
<evidence type="ECO:0000255" key="1">
    <source>
        <dbReference type="HAMAP-Rule" id="MF_00129"/>
    </source>
</evidence>
<reference key="1">
    <citation type="submission" date="2008-02" db="EMBL/GenBank/DDBJ databases">
        <title>Complete sequence of Synechococcus sp. PCC 7002.</title>
        <authorList>
            <person name="Li T."/>
            <person name="Zhao J."/>
            <person name="Zhao C."/>
            <person name="Liu Z."/>
            <person name="Zhao F."/>
            <person name="Marquardt J."/>
            <person name="Nomura C.T."/>
            <person name="Persson S."/>
            <person name="Detter J.C."/>
            <person name="Richardson P.M."/>
            <person name="Lanz C."/>
            <person name="Schuster S.C."/>
            <person name="Wang J."/>
            <person name="Li S."/>
            <person name="Huang X."/>
            <person name="Cai T."/>
            <person name="Yu Z."/>
            <person name="Luo J."/>
            <person name="Zhao J."/>
            <person name="Bryant D.A."/>
        </authorList>
    </citation>
    <scope>NUCLEOTIDE SEQUENCE [LARGE SCALE GENOMIC DNA]</scope>
    <source>
        <strain>ATCC 27264 / PCC 7002 / PR-6</strain>
    </source>
</reference>